<evidence type="ECO:0000255" key="1">
    <source>
        <dbReference type="HAMAP-Rule" id="MF_00268"/>
    </source>
</evidence>
<dbReference type="EMBL" id="CR848038">
    <property type="protein sequence ID" value="CAH64403.1"/>
    <property type="molecule type" value="Genomic_DNA"/>
</dbReference>
<dbReference type="RefSeq" id="WP_011097453.1">
    <property type="nucleotide sequence ID" value="NC_004552.2"/>
</dbReference>
<dbReference type="SMR" id="Q5L4P3"/>
<dbReference type="KEGG" id="cab:CAB965"/>
<dbReference type="eggNOG" id="COG0468">
    <property type="taxonomic scope" value="Bacteria"/>
</dbReference>
<dbReference type="HOGENOM" id="CLU_040469_3_2_0"/>
<dbReference type="OrthoDB" id="9776733at2"/>
<dbReference type="Proteomes" id="UP000001012">
    <property type="component" value="Chromosome"/>
</dbReference>
<dbReference type="GO" id="GO:0005829">
    <property type="term" value="C:cytosol"/>
    <property type="evidence" value="ECO:0007669"/>
    <property type="project" value="TreeGrafter"/>
</dbReference>
<dbReference type="GO" id="GO:0005524">
    <property type="term" value="F:ATP binding"/>
    <property type="evidence" value="ECO:0007669"/>
    <property type="project" value="UniProtKB-UniRule"/>
</dbReference>
<dbReference type="GO" id="GO:0016887">
    <property type="term" value="F:ATP hydrolysis activity"/>
    <property type="evidence" value="ECO:0007669"/>
    <property type="project" value="InterPro"/>
</dbReference>
<dbReference type="GO" id="GO:0140664">
    <property type="term" value="F:ATP-dependent DNA damage sensor activity"/>
    <property type="evidence" value="ECO:0007669"/>
    <property type="project" value="InterPro"/>
</dbReference>
<dbReference type="GO" id="GO:0003684">
    <property type="term" value="F:damaged DNA binding"/>
    <property type="evidence" value="ECO:0007669"/>
    <property type="project" value="UniProtKB-UniRule"/>
</dbReference>
<dbReference type="GO" id="GO:0003697">
    <property type="term" value="F:single-stranded DNA binding"/>
    <property type="evidence" value="ECO:0007669"/>
    <property type="project" value="UniProtKB-UniRule"/>
</dbReference>
<dbReference type="GO" id="GO:0006310">
    <property type="term" value="P:DNA recombination"/>
    <property type="evidence" value="ECO:0007669"/>
    <property type="project" value="UniProtKB-UniRule"/>
</dbReference>
<dbReference type="GO" id="GO:0006281">
    <property type="term" value="P:DNA repair"/>
    <property type="evidence" value="ECO:0007669"/>
    <property type="project" value="UniProtKB-UniRule"/>
</dbReference>
<dbReference type="GO" id="GO:0009432">
    <property type="term" value="P:SOS response"/>
    <property type="evidence" value="ECO:0007669"/>
    <property type="project" value="UniProtKB-UniRule"/>
</dbReference>
<dbReference type="CDD" id="cd00983">
    <property type="entry name" value="RecA"/>
    <property type="match status" value="1"/>
</dbReference>
<dbReference type="FunFam" id="3.40.50.300:FF:000087">
    <property type="entry name" value="Recombinase RecA"/>
    <property type="match status" value="1"/>
</dbReference>
<dbReference type="Gene3D" id="3.40.50.300">
    <property type="entry name" value="P-loop containing nucleotide triphosphate hydrolases"/>
    <property type="match status" value="1"/>
</dbReference>
<dbReference type="HAMAP" id="MF_00268">
    <property type="entry name" value="RecA"/>
    <property type="match status" value="1"/>
</dbReference>
<dbReference type="InterPro" id="IPR003593">
    <property type="entry name" value="AAA+_ATPase"/>
</dbReference>
<dbReference type="InterPro" id="IPR013765">
    <property type="entry name" value="DNA_recomb/repair_RecA"/>
</dbReference>
<dbReference type="InterPro" id="IPR020584">
    <property type="entry name" value="DNA_recomb/repair_RecA_CS"/>
</dbReference>
<dbReference type="InterPro" id="IPR027417">
    <property type="entry name" value="P-loop_NTPase"/>
</dbReference>
<dbReference type="InterPro" id="IPR049261">
    <property type="entry name" value="RecA-like_C"/>
</dbReference>
<dbReference type="InterPro" id="IPR049428">
    <property type="entry name" value="RecA-like_N"/>
</dbReference>
<dbReference type="InterPro" id="IPR020588">
    <property type="entry name" value="RecA_ATP-bd"/>
</dbReference>
<dbReference type="InterPro" id="IPR023400">
    <property type="entry name" value="RecA_C_sf"/>
</dbReference>
<dbReference type="InterPro" id="IPR020587">
    <property type="entry name" value="RecA_monomer-monomer_interface"/>
</dbReference>
<dbReference type="NCBIfam" id="TIGR02012">
    <property type="entry name" value="tigrfam_recA"/>
    <property type="match status" value="1"/>
</dbReference>
<dbReference type="PANTHER" id="PTHR45900:SF1">
    <property type="entry name" value="MITOCHONDRIAL DNA REPAIR PROTEIN RECA HOMOLOG-RELATED"/>
    <property type="match status" value="1"/>
</dbReference>
<dbReference type="PANTHER" id="PTHR45900">
    <property type="entry name" value="RECA"/>
    <property type="match status" value="1"/>
</dbReference>
<dbReference type="Pfam" id="PF00154">
    <property type="entry name" value="RecA"/>
    <property type="match status" value="1"/>
</dbReference>
<dbReference type="Pfam" id="PF21096">
    <property type="entry name" value="RecA_C"/>
    <property type="match status" value="1"/>
</dbReference>
<dbReference type="PRINTS" id="PR00142">
    <property type="entry name" value="RECA"/>
</dbReference>
<dbReference type="SMART" id="SM00382">
    <property type="entry name" value="AAA"/>
    <property type="match status" value="1"/>
</dbReference>
<dbReference type="SUPFAM" id="SSF52540">
    <property type="entry name" value="P-loop containing nucleoside triphosphate hydrolases"/>
    <property type="match status" value="1"/>
</dbReference>
<dbReference type="SUPFAM" id="SSF54752">
    <property type="entry name" value="RecA protein, C-terminal domain"/>
    <property type="match status" value="1"/>
</dbReference>
<dbReference type="PROSITE" id="PS00321">
    <property type="entry name" value="RECA_1"/>
    <property type="match status" value="1"/>
</dbReference>
<dbReference type="PROSITE" id="PS50162">
    <property type="entry name" value="RECA_2"/>
    <property type="match status" value="1"/>
</dbReference>
<dbReference type="PROSITE" id="PS50163">
    <property type="entry name" value="RECA_3"/>
    <property type="match status" value="1"/>
</dbReference>
<comment type="function">
    <text evidence="1">Can catalyze the hydrolysis of ATP in the presence of single-stranded DNA, the ATP-dependent uptake of single-stranded DNA by duplex DNA, and the ATP-dependent hybridization of homologous single-stranded DNAs. It interacts with LexA causing its activation and leading to its autocatalytic cleavage.</text>
</comment>
<comment type="subcellular location">
    <subcellularLocation>
        <location evidence="1">Cytoplasm</location>
    </subcellularLocation>
</comment>
<comment type="similarity">
    <text evidence="1">Belongs to the RecA family.</text>
</comment>
<protein>
    <recommendedName>
        <fullName evidence="1">Protein RecA</fullName>
    </recommendedName>
    <alternativeName>
        <fullName evidence="1">Recombinase A</fullName>
    </alternativeName>
</protein>
<sequence length="349" mass="37600">MNVPDRKKALEAAIAYIEKQFGSGSIMSLGKHSASHEISTIKTGALSLDLALGIGGVPKGRIVEIFGPESSGKTTLATHIVANAQKMGGVAAYIDAEHALDPSYASLIGANIHDLMISQPDCGEDALSIAELLARSGAVDVIVIDSVAALVPKSELEGDIGDVHVGLQARMMSQALRKLTATLARSQTCAIFINQIREKIGVSFGNPETTTGGRALKFYSSIRIDIRRIGAIKGNESFDLGNRIKVKVAKNKLAPPFKTAEFDILFNEGISSAGCILDLAVEHNIVEKKGSWFNYQDRKLGQGREAVREELKKNKKLLEELEKRILEVTASPKTIVEEKKEELAMQPVA</sequence>
<accession>Q5L4P3</accession>
<name>RECA_CHLAB</name>
<gene>
    <name evidence="1" type="primary">recA</name>
    <name type="ordered locus">CAB965</name>
</gene>
<proteinExistence type="inferred from homology"/>
<organism>
    <name type="scientific">Chlamydia abortus (strain DSM 27085 / S26/3)</name>
    <name type="common">Chlamydophila abortus</name>
    <dbReference type="NCBI Taxonomy" id="218497"/>
    <lineage>
        <taxon>Bacteria</taxon>
        <taxon>Pseudomonadati</taxon>
        <taxon>Chlamydiota</taxon>
        <taxon>Chlamydiia</taxon>
        <taxon>Chlamydiales</taxon>
        <taxon>Chlamydiaceae</taxon>
        <taxon>Chlamydia/Chlamydophila group</taxon>
        <taxon>Chlamydia</taxon>
    </lineage>
</organism>
<keyword id="KW-0067">ATP-binding</keyword>
<keyword id="KW-0963">Cytoplasm</keyword>
<keyword id="KW-0227">DNA damage</keyword>
<keyword id="KW-0233">DNA recombination</keyword>
<keyword id="KW-0234">DNA repair</keyword>
<keyword id="KW-0238">DNA-binding</keyword>
<keyword id="KW-0547">Nucleotide-binding</keyword>
<keyword id="KW-0742">SOS response</keyword>
<feature type="chain" id="PRO_0000122681" description="Protein RecA">
    <location>
        <begin position="1"/>
        <end position="349"/>
    </location>
</feature>
<feature type="binding site" evidence="1">
    <location>
        <begin position="67"/>
        <end position="74"/>
    </location>
    <ligand>
        <name>ATP</name>
        <dbReference type="ChEBI" id="CHEBI:30616"/>
    </ligand>
</feature>
<reference key="1">
    <citation type="journal article" date="2005" name="Genome Res.">
        <title>The Chlamydophila abortus genome sequence reveals an array of variable proteins that contribute to interspecies variation.</title>
        <authorList>
            <person name="Thomson N.R."/>
            <person name="Yeats C."/>
            <person name="Bell K."/>
            <person name="Holden M.T.G."/>
            <person name="Bentley S.D."/>
            <person name="Livingstone M."/>
            <person name="Cerdeno-Tarraga A.-M."/>
            <person name="Harris B."/>
            <person name="Doggett J."/>
            <person name="Ormond D."/>
            <person name="Mungall K."/>
            <person name="Clarke K."/>
            <person name="Feltwell T."/>
            <person name="Hance Z."/>
            <person name="Sanders M."/>
            <person name="Quail M.A."/>
            <person name="Price C."/>
            <person name="Barrell B.G."/>
            <person name="Parkhill J."/>
            <person name="Longbottom D."/>
        </authorList>
    </citation>
    <scope>NUCLEOTIDE SEQUENCE [LARGE SCALE GENOMIC DNA]</scope>
    <source>
        <strain>DSM 27085 / S26/3</strain>
    </source>
</reference>